<name>RL18_CLONN</name>
<protein>
    <recommendedName>
        <fullName evidence="1">Large ribosomal subunit protein uL18</fullName>
    </recommendedName>
    <alternativeName>
        <fullName evidence="2">50S ribosomal protein L18</fullName>
    </alternativeName>
</protein>
<comment type="function">
    <text evidence="1">This is one of the proteins that bind and probably mediate the attachment of the 5S RNA into the large ribosomal subunit, where it forms part of the central protuberance.</text>
</comment>
<comment type="subunit">
    <text evidence="1">Part of the 50S ribosomal subunit; part of the 5S rRNA/L5/L18/L25 subcomplex. Contacts the 5S and 23S rRNAs.</text>
</comment>
<comment type="similarity">
    <text evidence="1">Belongs to the universal ribosomal protein uL18 family.</text>
</comment>
<accession>A0PXW2</accession>
<reference key="1">
    <citation type="journal article" date="2006" name="Nat. Biotechnol.">
        <title>The genome and transcriptomes of the anti-tumor agent Clostridium novyi-NT.</title>
        <authorList>
            <person name="Bettegowda C."/>
            <person name="Huang X."/>
            <person name="Lin J."/>
            <person name="Cheong I."/>
            <person name="Kohli M."/>
            <person name="Szabo S.A."/>
            <person name="Zhang X."/>
            <person name="Diaz L.A. Jr."/>
            <person name="Velculescu V.E."/>
            <person name="Parmigiani G."/>
            <person name="Kinzler K.W."/>
            <person name="Vogelstein B."/>
            <person name="Zhou S."/>
        </authorList>
    </citation>
    <scope>NUCLEOTIDE SEQUENCE [LARGE SCALE GENOMIC DNA]</scope>
    <source>
        <strain>NT</strain>
    </source>
</reference>
<dbReference type="EMBL" id="CP000382">
    <property type="protein sequence ID" value="ABK62017.1"/>
    <property type="molecule type" value="Genomic_DNA"/>
</dbReference>
<dbReference type="RefSeq" id="WP_011721226.1">
    <property type="nucleotide sequence ID" value="NC_008593.1"/>
</dbReference>
<dbReference type="SMR" id="A0PXW2"/>
<dbReference type="STRING" id="386415.NT01CX_1131"/>
<dbReference type="KEGG" id="cno:NT01CX_1131"/>
<dbReference type="eggNOG" id="COG0256">
    <property type="taxonomic scope" value="Bacteria"/>
</dbReference>
<dbReference type="HOGENOM" id="CLU_098841_0_1_9"/>
<dbReference type="Proteomes" id="UP000008220">
    <property type="component" value="Chromosome"/>
</dbReference>
<dbReference type="GO" id="GO:0022625">
    <property type="term" value="C:cytosolic large ribosomal subunit"/>
    <property type="evidence" value="ECO:0007669"/>
    <property type="project" value="TreeGrafter"/>
</dbReference>
<dbReference type="GO" id="GO:0008097">
    <property type="term" value="F:5S rRNA binding"/>
    <property type="evidence" value="ECO:0007669"/>
    <property type="project" value="TreeGrafter"/>
</dbReference>
<dbReference type="GO" id="GO:0003735">
    <property type="term" value="F:structural constituent of ribosome"/>
    <property type="evidence" value="ECO:0007669"/>
    <property type="project" value="InterPro"/>
</dbReference>
<dbReference type="GO" id="GO:0006412">
    <property type="term" value="P:translation"/>
    <property type="evidence" value="ECO:0007669"/>
    <property type="project" value="UniProtKB-UniRule"/>
</dbReference>
<dbReference type="CDD" id="cd00432">
    <property type="entry name" value="Ribosomal_L18_L5e"/>
    <property type="match status" value="1"/>
</dbReference>
<dbReference type="FunFam" id="3.30.420.100:FF:000001">
    <property type="entry name" value="50S ribosomal protein L18"/>
    <property type="match status" value="1"/>
</dbReference>
<dbReference type="Gene3D" id="3.30.420.100">
    <property type="match status" value="1"/>
</dbReference>
<dbReference type="HAMAP" id="MF_01337_B">
    <property type="entry name" value="Ribosomal_uL18_B"/>
    <property type="match status" value="1"/>
</dbReference>
<dbReference type="InterPro" id="IPR004389">
    <property type="entry name" value="Ribosomal_uL18_bac-type"/>
</dbReference>
<dbReference type="InterPro" id="IPR005484">
    <property type="entry name" value="Ribosomal_uL18_bac/euk"/>
</dbReference>
<dbReference type="NCBIfam" id="TIGR00060">
    <property type="entry name" value="L18_bact"/>
    <property type="match status" value="1"/>
</dbReference>
<dbReference type="PANTHER" id="PTHR12899">
    <property type="entry name" value="39S RIBOSOMAL PROTEIN L18, MITOCHONDRIAL"/>
    <property type="match status" value="1"/>
</dbReference>
<dbReference type="PANTHER" id="PTHR12899:SF3">
    <property type="entry name" value="LARGE RIBOSOMAL SUBUNIT PROTEIN UL18M"/>
    <property type="match status" value="1"/>
</dbReference>
<dbReference type="Pfam" id="PF00861">
    <property type="entry name" value="Ribosomal_L18p"/>
    <property type="match status" value="1"/>
</dbReference>
<dbReference type="SUPFAM" id="SSF53137">
    <property type="entry name" value="Translational machinery components"/>
    <property type="match status" value="1"/>
</dbReference>
<keyword id="KW-1185">Reference proteome</keyword>
<keyword id="KW-0687">Ribonucleoprotein</keyword>
<keyword id="KW-0689">Ribosomal protein</keyword>
<keyword id="KW-0694">RNA-binding</keyword>
<keyword id="KW-0699">rRNA-binding</keyword>
<sequence>MFNKENRQKARVKRHLRVRNKISGTAARPRLAVYRSEKNIYAQIIDDVARITLVSASTLDKEFAEKVGSNKEAAKAVGTMVAKRALEKGIEEVVFDRGGYVYHGRVKELADAAREAGLKF</sequence>
<organism>
    <name type="scientific">Clostridium novyi (strain NT)</name>
    <dbReference type="NCBI Taxonomy" id="386415"/>
    <lineage>
        <taxon>Bacteria</taxon>
        <taxon>Bacillati</taxon>
        <taxon>Bacillota</taxon>
        <taxon>Clostridia</taxon>
        <taxon>Eubacteriales</taxon>
        <taxon>Clostridiaceae</taxon>
        <taxon>Clostridium</taxon>
    </lineage>
</organism>
<evidence type="ECO:0000255" key="1">
    <source>
        <dbReference type="HAMAP-Rule" id="MF_01337"/>
    </source>
</evidence>
<evidence type="ECO:0000305" key="2"/>
<proteinExistence type="inferred from homology"/>
<feature type="chain" id="PRO_1000053016" description="Large ribosomal subunit protein uL18">
    <location>
        <begin position="1"/>
        <end position="120"/>
    </location>
</feature>
<gene>
    <name evidence="1" type="primary">rplR</name>
    <name type="ordered locus">NT01CX_1131</name>
</gene>